<gene>
    <name evidence="4" type="primary">ullA</name>
</gene>
<dbReference type="EC" id="4.2.2.-" evidence="3"/>
<dbReference type="EMBL" id="LC278382">
    <property type="protein sequence ID" value="BAY00694.1"/>
    <property type="molecule type" value="Genomic_DNA"/>
</dbReference>
<dbReference type="SMR" id="A0A1Z4F647"/>
<dbReference type="GO" id="GO:0016829">
    <property type="term" value="F:lyase activity"/>
    <property type="evidence" value="ECO:0007669"/>
    <property type="project" value="UniProtKB-KW"/>
</dbReference>
<dbReference type="GO" id="GO:0046872">
    <property type="term" value="F:metal ion binding"/>
    <property type="evidence" value="ECO:0007669"/>
    <property type="project" value="UniProtKB-KW"/>
</dbReference>
<dbReference type="GO" id="GO:0000272">
    <property type="term" value="P:polysaccharide catabolic process"/>
    <property type="evidence" value="ECO:0007669"/>
    <property type="project" value="InterPro"/>
</dbReference>
<dbReference type="Gene3D" id="1.10.1330.10">
    <property type="entry name" value="Dockerin domain"/>
    <property type="match status" value="1"/>
</dbReference>
<dbReference type="Gene3D" id="2.60.40.10">
    <property type="entry name" value="Immunoglobulins"/>
    <property type="match status" value="4"/>
</dbReference>
<dbReference type="InterPro" id="IPR036439">
    <property type="entry name" value="Dockerin_dom_sf"/>
</dbReference>
<dbReference type="InterPro" id="IPR013783">
    <property type="entry name" value="Ig-like_fold"/>
</dbReference>
<dbReference type="Pfam" id="PF15892">
    <property type="entry name" value="BNR_4"/>
    <property type="match status" value="1"/>
</dbReference>
<dbReference type="SUPFAM" id="SSF63446">
    <property type="entry name" value="Type I dockerin domain"/>
    <property type="match status" value="1"/>
</dbReference>
<name>UL24L_ALTSX</name>
<comment type="function">
    <text evidence="2 3">Ulvan lyase involved in ulvan degradation (PubMed:28958183). Ulvan is the main polysaccharide component of the Ulvales (green seaweed) cell wall. It is composed of disaccharide building blocks comprising 3-sulfated rhamnose (Rha3S) linked to D-glucuronic acid (GlcA), L-iduronic acid (IduA), or D-xylose (Xyl). Ulvan lyase catalyzes preferentially the endolytic cleavage of the glycosidic bond between Rha3S and the uronic acid GlcA, but not IduA, producing oligosaccharides that have unsaturated 4-deoxy-L-threo-hex-4-enopyranosiduronic acid (deltaUA) at the non-reducing end. The most abundant end products in the degradation of the ulvan polysaccharide were deltaUA-Rha3S disaccharides and deltaUA-Rha3S-IduA-Rha3S and deltaUA-Rha3S-Xyl-Rha3S tetrasaccharides (By similarity).</text>
</comment>
<comment type="biophysicochemical properties">
    <kinetics>
        <KM evidence="3">7.2 mg/ml for ulvan</KM>
        <Vmax evidence="3">185.0 umol/min/mg enzyme</Vmax>
    </kinetics>
</comment>
<comment type="induction">
    <text evidence="3">By ulvan (at protein level).</text>
</comment>
<comment type="similarity">
    <text evidence="5">Belongs to the polysaccharide lyase 24 family.</text>
</comment>
<proteinExistence type="evidence at protein level"/>
<accession>A0A1Z4F647</accession>
<sequence length="999" mass="110838">MKCLKTLLVSTTLLGAFSLNAEVTLEQQIKITDEGLHFDGRNLDFSNVGSPDTGEKYDYFFGPNISAHGDAVKTYKHYVFMTWYKGGKNERNVMLSRYNTLSGELSTIEFPHRHTGFRGDPLVGESHNTIGLAVSPINGTIHMVFDMHAYDDNNHGGKFKDDFFRYSYSVPGAAELPHSEFTLDKFVKDTSEVSQGDDDYKHLTMTGDLGDKGNFARLTYPKFFTTVDGTLLLYMRLGGNNNGAYVFNRYDAEAEKWSTFTPFNENNQKSKGNPYNWGLYGNMKYINGKLRVGFQQRSSDNTDKYKYQNGVFYAYSDHPDGFGDWKNHKGEPMTWPLINSDEIKVFEPGDYISHTEANSVYIVGSFDWTVTEKGDIHIISKVRSTDRNRPDYEEVYIHSYKPAGADEFIISTDFTGASEIYTSGDNVYIVGLEGGRPYVEKAQGGTNNFVRVYKATDGPVFDHGTLYIKDGKVYYYLMERTSGNAMPLYLQIIDLDLESDANAPLVSFPSPSLTVEQGFEKLSLNISAESPVEGRFIQSVSLYINDELVRTDDSMPYLFGHGSKPHETGAMGWLDTHEPNPSPLPAGTHIFKAVAVDSEGDSAIATMVLNVNSNAPIVSFPQESLEVDEGFEKLSLNISAESAVEGRSIESVSLYINGELVRTDTSLPYLFGHASKPHETGAMGWLDTHSTNPSPLTAGTYEFTAVAIDSEGEESTASMQLVVKGEPQPPAVTWPNSTVTVYEGYEKLAITIDAESPVEGRDIQSVTLYRNGELVRVDTRPVWNFGHSFAPYEFGAMGWLDRHEPNPSPLGVGTHTFTAVAKDSTGLEGESDMTLIVLSLPGPSITINESDVSLLTEYQNLAITADASTANDDITIVSLALYLNEQLVREIYEPPFEWGGENYSDELLDLPVGTHLAKVVATDSNNNQTEASMFVTIELLGDLNKDSVVDNKDIRLFTAALRNGEEMNIRYDFNDDGVVNNRDTRGLVHRCTYSRCGSN</sequence>
<evidence type="ECO:0000250" key="1">
    <source>
        <dbReference type="UniProtKB" id="A0A109PTH9"/>
    </source>
</evidence>
<evidence type="ECO:0000250" key="2">
    <source>
        <dbReference type="UniProtKB" id="P9WF07"/>
    </source>
</evidence>
<evidence type="ECO:0000269" key="3">
    <source>
    </source>
</evidence>
<evidence type="ECO:0000303" key="4">
    <source>
    </source>
</evidence>
<evidence type="ECO:0000305" key="5"/>
<keyword id="KW-0106">Calcium</keyword>
<keyword id="KW-0903">Direct protein sequencing</keyword>
<keyword id="KW-0456">Lyase</keyword>
<keyword id="KW-0479">Metal-binding</keyword>
<keyword id="KW-0732">Signal</keyword>
<feature type="signal peptide" evidence="3">
    <location>
        <begin position="1"/>
        <end position="21"/>
    </location>
</feature>
<feature type="chain" id="PRO_5012644910" description="Ulvan lyase, long isoform">
    <location>
        <begin position="22"/>
        <end position="999"/>
    </location>
</feature>
<feature type="active site" description="Proton donor/acceptor" evidence="1">
    <location>
        <position position="127"/>
    </location>
</feature>
<feature type="binding site" evidence="1">
    <location>
        <begin position="126"/>
        <end position="127"/>
    </location>
    <ligand>
        <name>substrate</name>
    </ligand>
</feature>
<feature type="binding site" evidence="1">
    <location>
        <position position="189"/>
    </location>
    <ligand>
        <name>Ca(2+)</name>
        <dbReference type="ChEBI" id="CHEBI:29108"/>
        <label>1</label>
        <note>structural</note>
    </ligand>
</feature>
<feature type="binding site" evidence="1">
    <location>
        <position position="199"/>
    </location>
    <ligand>
        <name>Ca(2+)</name>
        <dbReference type="ChEBI" id="CHEBI:29108"/>
        <label>1</label>
        <note>structural</note>
    </ligand>
</feature>
<feature type="binding site" evidence="1">
    <location>
        <position position="201"/>
    </location>
    <ligand>
        <name>Ca(2+)</name>
        <dbReference type="ChEBI" id="CHEBI:29108"/>
        <label>1</label>
        <note>structural</note>
    </ligand>
</feature>
<feature type="binding site" evidence="1">
    <location>
        <position position="280"/>
    </location>
    <ligand>
        <name>substrate</name>
    </ligand>
</feature>
<feature type="binding site" evidence="1">
    <location>
        <position position="297"/>
    </location>
    <ligand>
        <name>substrate</name>
    </ligand>
</feature>
<feature type="binding site" evidence="1">
    <location>
        <position position="300"/>
    </location>
    <ligand>
        <name>Ca(2+)</name>
        <dbReference type="ChEBI" id="CHEBI:29108"/>
        <label>2</label>
        <note>structural</note>
    </ligand>
</feature>
<feature type="binding site" evidence="1">
    <location>
        <position position="303"/>
    </location>
    <ligand>
        <name>Ca(2+)</name>
        <dbReference type="ChEBI" id="CHEBI:29108"/>
        <label>2</label>
        <note>structural</note>
    </ligand>
</feature>
<feature type="binding site" evidence="1">
    <location>
        <position position="305"/>
    </location>
    <ligand>
        <name>Ca(2+)</name>
        <dbReference type="ChEBI" id="CHEBI:29108"/>
        <label>2</label>
        <note>structural</note>
    </ligand>
</feature>
<feature type="binding site" evidence="1">
    <location>
        <position position="361"/>
    </location>
    <ligand>
        <name>substrate</name>
    </ligand>
</feature>
<feature type="site" description="Neutralizes the sugar carboxylate group at subsite +1" evidence="1">
    <location>
        <position position="236"/>
    </location>
</feature>
<protein>
    <recommendedName>
        <fullName>Ulvan lyase, long isoform</fullName>
        <ecNumber evidence="3">4.2.2.-</ecNumber>
    </recommendedName>
    <alternativeName>
        <fullName evidence="4">Ulvan lyase A</fullName>
    </alternativeName>
</protein>
<organism>
    <name type="scientific">Alteromonas sp</name>
    <dbReference type="NCBI Taxonomy" id="232"/>
    <lineage>
        <taxon>Bacteria</taxon>
        <taxon>Pseudomonadati</taxon>
        <taxon>Pseudomonadota</taxon>
        <taxon>Gammaproteobacteria</taxon>
        <taxon>Alteromonadales</taxon>
        <taxon>Alteromonadaceae</taxon>
        <taxon>Alteromonas/Salinimonas group</taxon>
        <taxon>Alteromonas</taxon>
    </lineage>
</organism>
<reference key="1">
    <citation type="journal article" date="2017" name="Biosci. Biotechnol. Biochem.">
        <title>Characterization of an Alteromonas long-type ulvan lyase involved in the degradation of ulvan extracted from Ulva ohnoi.</title>
        <authorList>
            <person name="He C."/>
            <person name="Muramatsu H."/>
            <person name="Kato S.I."/>
            <person name="Ohnishi K."/>
        </authorList>
    </citation>
    <scope>NUCLEOTIDE SEQUENCE [GENOMIC DNA]</scope>
    <scope>PROTEIN SEQUENCE OF 22-36</scope>
    <scope>FUNCTION</scope>
    <scope>CATALYTIC ACTIVITY</scope>
    <scope>BIOPHYSICOCHEMICAL PROPERTIES</scope>
    <scope>INDUCTION BY ULVAN</scope>
    <source>
        <strain>KUL17</strain>
    </source>
</reference>